<dbReference type="EMBL" id="DP000236">
    <property type="protein sequence ID" value="ABK34434.1"/>
    <property type="molecule type" value="Genomic_DNA"/>
</dbReference>
<dbReference type="RefSeq" id="NP_001162159.1">
    <property type="nucleotide sequence ID" value="NM_001168688.1"/>
</dbReference>
<dbReference type="SMR" id="A0M8U6"/>
<dbReference type="BioGRID" id="141020">
    <property type="interactions" value="1"/>
</dbReference>
<dbReference type="FunCoup" id="A0M8U6">
    <property type="interactions" value="357"/>
</dbReference>
<dbReference type="STRING" id="9615.ENSCAFP00000033684"/>
<dbReference type="PaxDb" id="9612-ENSCAFP00000005055"/>
<dbReference type="Ensembl" id="ENSCAFT00000005456.6">
    <property type="protein sequence ID" value="ENSCAFP00000005055.5"/>
    <property type="gene ID" value="ENSCAFG00000003399.6"/>
</dbReference>
<dbReference type="Ensembl" id="ENSCAFT00040030017.1">
    <property type="protein sequence ID" value="ENSCAFP00040026075.1"/>
    <property type="gene ID" value="ENSCAFG00040016295.1"/>
</dbReference>
<dbReference type="Ensembl" id="ENSCAFT00845011388.1">
    <property type="protein sequence ID" value="ENSCAFP00845008895.1"/>
    <property type="gene ID" value="ENSCAFG00845006418.1"/>
</dbReference>
<dbReference type="GeneID" id="475293"/>
<dbReference type="KEGG" id="cfa:475293"/>
<dbReference type="CTD" id="26136"/>
<dbReference type="VEuPathDB" id="HostDB:ENSCAFG00845006418"/>
<dbReference type="VGNC" id="VGNC:47256">
    <property type="gene designation" value="TES"/>
</dbReference>
<dbReference type="eggNOG" id="KOG1704">
    <property type="taxonomic scope" value="Eukaryota"/>
</dbReference>
<dbReference type="GeneTree" id="ENSGT00940000155993"/>
<dbReference type="InParanoid" id="A0M8U6"/>
<dbReference type="OrthoDB" id="10069167at2759"/>
<dbReference type="Proteomes" id="UP000002254">
    <property type="component" value="Chromosome 14"/>
</dbReference>
<dbReference type="Proteomes" id="UP000694429">
    <property type="component" value="Unplaced"/>
</dbReference>
<dbReference type="Proteomes" id="UP000694542">
    <property type="component" value="Chromosome 14"/>
</dbReference>
<dbReference type="Proteomes" id="UP000805418">
    <property type="component" value="Chromosome 14"/>
</dbReference>
<dbReference type="GO" id="GO:0005737">
    <property type="term" value="C:cytoplasm"/>
    <property type="evidence" value="ECO:0000250"/>
    <property type="project" value="UniProtKB"/>
</dbReference>
<dbReference type="GO" id="GO:0005925">
    <property type="term" value="C:focal adhesion"/>
    <property type="evidence" value="ECO:0007669"/>
    <property type="project" value="UniProtKB-SubCell"/>
</dbReference>
<dbReference type="GO" id="GO:0008270">
    <property type="term" value="F:zinc ion binding"/>
    <property type="evidence" value="ECO:0000250"/>
    <property type="project" value="UniProtKB"/>
</dbReference>
<dbReference type="GO" id="GO:0008285">
    <property type="term" value="P:negative regulation of cell population proliferation"/>
    <property type="evidence" value="ECO:0000250"/>
    <property type="project" value="UniProtKB"/>
</dbReference>
<dbReference type="CDD" id="cd09413">
    <property type="entry name" value="LIM1_Testin"/>
    <property type="match status" value="1"/>
</dbReference>
<dbReference type="CDD" id="cd09416">
    <property type="entry name" value="LIM2_Testin"/>
    <property type="match status" value="1"/>
</dbReference>
<dbReference type="CDD" id="cd09419">
    <property type="entry name" value="LIM3_Testin"/>
    <property type="match status" value="1"/>
</dbReference>
<dbReference type="CDD" id="cd09829">
    <property type="entry name" value="PET_testin"/>
    <property type="match status" value="1"/>
</dbReference>
<dbReference type="FunFam" id="2.10.110.10:FF:000061">
    <property type="entry name" value="Testin"/>
    <property type="match status" value="1"/>
</dbReference>
<dbReference type="FunFam" id="2.10.110.10:FF:000065">
    <property type="entry name" value="Testin"/>
    <property type="match status" value="1"/>
</dbReference>
<dbReference type="FunFam" id="2.10.110.10:FF:000005">
    <property type="entry name" value="Testin isoform 1"/>
    <property type="match status" value="1"/>
</dbReference>
<dbReference type="Gene3D" id="2.10.110.10">
    <property type="entry name" value="Cysteine Rich Protein"/>
    <property type="match status" value="3"/>
</dbReference>
<dbReference type="InterPro" id="IPR034958">
    <property type="entry name" value="LIM1_Testin"/>
</dbReference>
<dbReference type="InterPro" id="IPR034959">
    <property type="entry name" value="LIM2_Testin"/>
</dbReference>
<dbReference type="InterPro" id="IPR034960">
    <property type="entry name" value="LIM3_Testin"/>
</dbReference>
<dbReference type="InterPro" id="IPR010442">
    <property type="entry name" value="PET_domain"/>
</dbReference>
<dbReference type="InterPro" id="IPR033724">
    <property type="entry name" value="PET_testin"/>
</dbReference>
<dbReference type="InterPro" id="IPR047120">
    <property type="entry name" value="Pk/Esn/Tes"/>
</dbReference>
<dbReference type="InterPro" id="IPR001781">
    <property type="entry name" value="Znf_LIM"/>
</dbReference>
<dbReference type="PANTHER" id="PTHR24211">
    <property type="entry name" value="LIM DOMAIN-CONTAINING PROTEIN"/>
    <property type="match status" value="1"/>
</dbReference>
<dbReference type="PANTHER" id="PTHR24211:SF1">
    <property type="entry name" value="TESTIN"/>
    <property type="match status" value="1"/>
</dbReference>
<dbReference type="Pfam" id="PF00412">
    <property type="entry name" value="LIM"/>
    <property type="match status" value="3"/>
</dbReference>
<dbReference type="Pfam" id="PF06297">
    <property type="entry name" value="PET"/>
    <property type="match status" value="1"/>
</dbReference>
<dbReference type="SMART" id="SM00132">
    <property type="entry name" value="LIM"/>
    <property type="match status" value="3"/>
</dbReference>
<dbReference type="SUPFAM" id="SSF57716">
    <property type="entry name" value="Glucocorticoid receptor-like (DNA-binding domain)"/>
    <property type="match status" value="2"/>
</dbReference>
<dbReference type="PROSITE" id="PS00478">
    <property type="entry name" value="LIM_DOMAIN_1"/>
    <property type="match status" value="2"/>
</dbReference>
<dbReference type="PROSITE" id="PS50023">
    <property type="entry name" value="LIM_DOMAIN_2"/>
    <property type="match status" value="3"/>
</dbReference>
<dbReference type="PROSITE" id="PS51303">
    <property type="entry name" value="PET"/>
    <property type="match status" value="1"/>
</dbReference>
<feature type="chain" id="PRO_0000278797" description="Testin">
    <location>
        <begin position="1"/>
        <end position="421"/>
    </location>
</feature>
<feature type="domain" description="PET" evidence="3">
    <location>
        <begin position="92"/>
        <end position="199"/>
    </location>
</feature>
<feature type="domain" description="LIM zinc-binding 1" evidence="2">
    <location>
        <begin position="234"/>
        <end position="297"/>
    </location>
</feature>
<feature type="domain" description="LIM zinc-binding 2" evidence="2">
    <location>
        <begin position="299"/>
        <end position="359"/>
    </location>
</feature>
<feature type="domain" description="LIM zinc-binding 3" evidence="2">
    <location>
        <begin position="362"/>
        <end position="421"/>
    </location>
</feature>
<feature type="region of interest" description="Disordered" evidence="4">
    <location>
        <begin position="133"/>
        <end position="164"/>
    </location>
</feature>
<feature type="compositionally biased region" description="Basic and acidic residues" evidence="4">
    <location>
        <begin position="155"/>
        <end position="164"/>
    </location>
</feature>
<keyword id="KW-0965">Cell junction</keyword>
<keyword id="KW-0963">Cytoplasm</keyword>
<keyword id="KW-0440">LIM domain</keyword>
<keyword id="KW-0479">Metal-binding</keyword>
<keyword id="KW-1185">Reference proteome</keyword>
<keyword id="KW-0677">Repeat</keyword>
<keyword id="KW-0862">Zinc</keyword>
<gene>
    <name type="primary">TES</name>
</gene>
<proteinExistence type="inferred from homology"/>
<reference key="1">
    <citation type="journal article" date="2003" name="Nature">
        <title>Comparative analyses of multi-species sequences from targeted genomic regions.</title>
        <authorList>
            <person name="Thomas J.W."/>
            <person name="Touchman J.W."/>
            <person name="Blakesley R.W."/>
            <person name="Bouffard G.G."/>
            <person name="Beckstrom-Sternberg S.M."/>
            <person name="Margulies E.H."/>
            <person name="Blanchette M."/>
            <person name="Siepel A.C."/>
            <person name="Thomas P.J."/>
            <person name="McDowell J.C."/>
            <person name="Maskeri B."/>
            <person name="Hansen N.F."/>
            <person name="Schwartz M.S."/>
            <person name="Weber R.J."/>
            <person name="Kent W.J."/>
            <person name="Karolchik D."/>
            <person name="Bruen T.C."/>
            <person name="Bevan R."/>
            <person name="Cutler D.J."/>
            <person name="Schwartz S."/>
            <person name="Elnitski L."/>
            <person name="Idol J.R."/>
            <person name="Prasad A.B."/>
            <person name="Lee-Lin S.-Q."/>
            <person name="Maduro V.V.B."/>
            <person name="Summers T.J."/>
            <person name="Portnoy M.E."/>
            <person name="Dietrich N.L."/>
            <person name="Akhter N."/>
            <person name="Ayele K."/>
            <person name="Benjamin B."/>
            <person name="Cariaga K."/>
            <person name="Brinkley C.P."/>
            <person name="Brooks S.Y."/>
            <person name="Granite S."/>
            <person name="Guan X."/>
            <person name="Gupta J."/>
            <person name="Haghighi P."/>
            <person name="Ho S.-L."/>
            <person name="Huang M.C."/>
            <person name="Karlins E."/>
            <person name="Laric P.L."/>
            <person name="Legaspi R."/>
            <person name="Lim M.J."/>
            <person name="Maduro Q.L."/>
            <person name="Masiello C.A."/>
            <person name="Mastrian S.D."/>
            <person name="McCloskey J.C."/>
            <person name="Pearson R."/>
            <person name="Stantripop S."/>
            <person name="Tiongson E.E."/>
            <person name="Tran J.T."/>
            <person name="Tsurgeon C."/>
            <person name="Vogt J.L."/>
            <person name="Walker M.A."/>
            <person name="Wetherby K.D."/>
            <person name="Wiggins L.S."/>
            <person name="Young A.C."/>
            <person name="Zhang L.-H."/>
            <person name="Osoegawa K."/>
            <person name="Zhu B."/>
            <person name="Zhao B."/>
            <person name="Shu C.L."/>
            <person name="De Jong P.J."/>
            <person name="Lawrence C.E."/>
            <person name="Smit A.F."/>
            <person name="Chakravarti A."/>
            <person name="Haussler D."/>
            <person name="Green P."/>
            <person name="Miller W."/>
            <person name="Green E.D."/>
        </authorList>
    </citation>
    <scope>NUCLEOTIDE SEQUENCE [LARGE SCALE GENOMIC DNA]</scope>
</reference>
<sequence length="421" mass="48008">MELEAKVKKMGLGHEQGFGAPCLKCKEKCEGFELHFWRKICRNCKCGQEEHDVLLSNEEDRKVGKLFEDTKYTTLIAKLKSDGIPMYKRNVMILTNPVAAKKNVSINTVTYEWAPPVQNQALARQYMQMLPKEKQPVAGSEGAQYRKKQLAKQLPAHDQDPSKCHELSPKEVKEMEQFVKKYKSEALGVGDVKLPREMDAQSTNRMYIPGGDRSTAAAVGAMEDKSAEHKRTQYSCYCCKQSMKEGDPAIYAERAGYDKLWHPACFVCSTCHELLVDMIYFWKNGKLYCGRHYCDSEKPRCAGCDELIFSNEYTQAENQNWHLKHFCCFDCDNILAGEIYVMVNDKPVCKPCYVKNHAVVCQGCHNAIDPEVQRVTYNNFSWHASTECFLCSCCSKCLIGQKFMPVEGMVFCSVECKKMMS</sequence>
<comment type="function">
    <text evidence="1">Scaffold protein that may play a role in cell adhesion, cell spreading and in the reorganization of the actin cytoskeleton. Plays a role in the regulation of cell proliferation. May act as a tumor suppressor (By similarity).</text>
</comment>
<comment type="subunit">
    <text evidence="1">Interacts via LIM domain 1 with ZYX. Interacts (via LIM domain 3) with ENAH and VASP. Interacts with ALKBH4, talin, actin, alpha-actinin, GRIP1 and PXN (By similarity). Interacts (via LIM domain 2) with ACTL7A (via N-terminus). Heterodimer with ACTL7A; the heterodimer interacts with ENAH to form a heterotrimer (By similarity).</text>
</comment>
<comment type="subcellular location">
    <subcellularLocation>
        <location evidence="1">Cytoplasm</location>
    </subcellularLocation>
    <subcellularLocation>
        <location evidence="1">Cell junction</location>
        <location evidence="1">Focal adhesion</location>
    </subcellularLocation>
    <text evidence="1">Detected along actin stress fibers.</text>
</comment>
<comment type="domain">
    <text evidence="1">The N-terminal and the C-terminal halves of the protein can associate with each other, thereby hindering interactions with ZYX.</text>
</comment>
<comment type="similarity">
    <text evidence="5">Belongs to the prickle / espinas / testin family.</text>
</comment>
<evidence type="ECO:0000250" key="1"/>
<evidence type="ECO:0000255" key="2">
    <source>
        <dbReference type="PROSITE-ProRule" id="PRU00125"/>
    </source>
</evidence>
<evidence type="ECO:0000255" key="3">
    <source>
        <dbReference type="PROSITE-ProRule" id="PRU00636"/>
    </source>
</evidence>
<evidence type="ECO:0000256" key="4">
    <source>
        <dbReference type="SAM" id="MobiDB-lite"/>
    </source>
</evidence>
<evidence type="ECO:0000305" key="5"/>
<organism>
    <name type="scientific">Canis lupus familiaris</name>
    <name type="common">Dog</name>
    <name type="synonym">Canis familiaris</name>
    <dbReference type="NCBI Taxonomy" id="9615"/>
    <lineage>
        <taxon>Eukaryota</taxon>
        <taxon>Metazoa</taxon>
        <taxon>Chordata</taxon>
        <taxon>Craniata</taxon>
        <taxon>Vertebrata</taxon>
        <taxon>Euteleostomi</taxon>
        <taxon>Mammalia</taxon>
        <taxon>Eutheria</taxon>
        <taxon>Laurasiatheria</taxon>
        <taxon>Carnivora</taxon>
        <taxon>Caniformia</taxon>
        <taxon>Canidae</taxon>
        <taxon>Canis</taxon>
    </lineage>
</organism>
<accession>A0M8U6</accession>
<name>TES_CANLF</name>
<protein>
    <recommendedName>
        <fullName>Testin</fullName>
    </recommendedName>
</protein>